<accession>A0A8F4NUL3</accession>
<keyword id="KW-0378">Hydrolase</keyword>
<keyword id="KW-0843">Virulence</keyword>
<dbReference type="EC" id="3.7.1.-" evidence="2"/>
<dbReference type="EMBL" id="MW690134">
    <property type="protein sequence ID" value="QXF14596.1"/>
    <property type="molecule type" value="Genomic_DNA"/>
</dbReference>
<dbReference type="SMR" id="A0A8F4NUL3"/>
<dbReference type="GO" id="GO:0016787">
    <property type="term" value="F:hydrolase activity"/>
    <property type="evidence" value="ECO:0007669"/>
    <property type="project" value="UniProtKB-KW"/>
</dbReference>
<dbReference type="Gene3D" id="1.20.1440.110">
    <property type="entry name" value="acylaminoacyl peptidase"/>
    <property type="match status" value="1"/>
</dbReference>
<dbReference type="Gene3D" id="3.40.50.1820">
    <property type="entry name" value="alpha/beta hydrolase"/>
    <property type="match status" value="1"/>
</dbReference>
<dbReference type="InterPro" id="IPR029058">
    <property type="entry name" value="AB_hydrolase_fold"/>
</dbReference>
<dbReference type="InterPro" id="IPR010520">
    <property type="entry name" value="FrsA-like"/>
</dbReference>
<dbReference type="InterPro" id="IPR050261">
    <property type="entry name" value="FrsA_esterase"/>
</dbReference>
<dbReference type="PANTHER" id="PTHR22946:SF13">
    <property type="entry name" value="ALPHA_BETA HYDROLASE PSOB"/>
    <property type="match status" value="1"/>
</dbReference>
<dbReference type="PANTHER" id="PTHR22946">
    <property type="entry name" value="DIENELACTONE HYDROLASE DOMAIN-CONTAINING PROTEIN-RELATED"/>
    <property type="match status" value="1"/>
</dbReference>
<dbReference type="Pfam" id="PF06500">
    <property type="entry name" value="FrsA-like"/>
    <property type="match status" value="1"/>
</dbReference>
<dbReference type="SUPFAM" id="SSF53474">
    <property type="entry name" value="alpha/beta-Hydrolases"/>
    <property type="match status" value="1"/>
</dbReference>
<reference key="1">
    <citation type="journal article" date="2021" name="J. Am. Chem. Soc.">
        <title>Biosynthesis of para-cyclophane-containing hirsutellone family of fungal natural products.</title>
        <authorList>
            <person name="Ohashi M."/>
            <person name="Kakule T.B."/>
            <person name="Tang M.C."/>
            <person name="Jamieson C.S."/>
            <person name="Liu M."/>
            <person name="Zhao Y.L."/>
            <person name="Houk K.N."/>
            <person name="Tang Y."/>
        </authorList>
    </citation>
    <scope>NUCLEOTIDE SEQUENCE [GENOMIC DNA]</scope>
    <scope>FUNCTION</scope>
    <scope>CATALYTIC ACTIVITY</scope>
    <scope>PATHWAY</scope>
</reference>
<sequence length="426" mass="47073">MFTFSSSFMFDFELTRLLGSASSGGCDVGEFKSAVGKIKKDDPESWSVAWKEQAERAQRIGDQAAKAGYRLLARNAYLRASNYFRVTPYMFSNDDARVVPLIEQSISSFKKAAVLMDGEVICVEIPYEKGITLPGYLFLPPSYARLPGKVPIVMYAAGADSTKEELYFLYGHTGPQLGYAVLCLEGPGQGLLLKKSKVPLRPDFEVVAEKIVEFLDNLSESRPTLELDTGRLAMAGAATGGYFALRAATNPRVKACISIDPFFSLWELCLSRAPKAFFKLWDSGWVPDSTFDTFTDVHGRGNFQSGWEINLGRSSMGAEKPTAMFRRFKDFTLEPAAGEVPILDKIRCAVFLTGPGAGQDMYSSAEESTFKIHRLLSNVPDSNKEVWVPTDVAEGGLTAKIGAWALLAQKTFEFLDKHFDIKRPEL</sequence>
<feature type="chain" id="PRO_0000458433" description="Alpha/beta hydrolase pydG">
    <location>
        <begin position="1"/>
        <end position="426"/>
    </location>
</feature>
<organism>
    <name type="scientific">Acremonium sp</name>
    <dbReference type="NCBI Taxonomy" id="2046025"/>
    <lineage>
        <taxon>Eukaryota</taxon>
        <taxon>Fungi</taxon>
        <taxon>Dikarya</taxon>
        <taxon>Ascomycota</taxon>
        <taxon>Pezizomycotina</taxon>
        <taxon>Sordariomycetes</taxon>
        <taxon>Hypocreomycetidae</taxon>
        <taxon>Hypocreales</taxon>
        <taxon>Hypocreales incertae sedis</taxon>
        <taxon>Acremonium</taxon>
    </lineage>
</organism>
<proteinExistence type="evidence at protein level"/>
<comment type="function">
    <text evidence="2 5">Alpha/beta hydrolasee; part of the gene cluster that mediates the biosynthesis of pyrrocidines, fungal natural products containing a macrocyclic para-cyclophane connected to a decahydrofluorene ring system that show potent antibiotic activities toward Gram-negative bacteria (PubMed:33834778). Within the pathway, pydG catalyzes the Knoevenagel condensation that affords the 3-pyrrolin-2-one ring, using as substrate the polyketide-tyrosyl acyl thioester product of pydA (PubMed:33834778). The pathway begins with the PKS-NRPS pydA which, with the help of the trans-enoyl reductase pydC, synthesizes the polyketide-tyrosyl acyl thioester product which can be reductively off-loaded by the terminal reductase (R) domain in pydA. The alpha/beta hydrolase pydG is then required to catalyze the subsequent Knoevenagel condensation that affords the 3-pyrrolin-2-one ring, whereas the four proteins pydB, pydE, pydX and pydZ then function synergistically to form the cyclophane. PydB and the membrane-bound pydX and pydZ are lipid-binding proteins that can sequester and mold the pdyG product into the inverse S-shape. Binding of the medium chain reductase pydE to the complex would trigger the cascade oxidative cyclization. PydY is involved in the Diels-Alder cycloaddition that forms the decahydrofluorene core. Additional non-enzymatic hydroxylation yields pyrrocidine A2 which can be further reduced into pyrrocidine B by an endogenous reductase (Probable).</text>
</comment>
<comment type="pathway">
    <text evidence="2">Mycotoxin biosynthesis.</text>
</comment>
<comment type="subunit">
    <text evidence="1">Homodimer.</text>
</comment>
<comment type="similarity">
    <text evidence="4">Belongs to the AB hydrolase superfamily.</text>
</comment>
<evidence type="ECO:0000250" key="1">
    <source>
        <dbReference type="UniProtKB" id="Q93NG6"/>
    </source>
</evidence>
<evidence type="ECO:0000269" key="2">
    <source>
    </source>
</evidence>
<evidence type="ECO:0000303" key="3">
    <source>
    </source>
</evidence>
<evidence type="ECO:0000305" key="4"/>
<evidence type="ECO:0000305" key="5">
    <source>
    </source>
</evidence>
<gene>
    <name evidence="3" type="primary">pydG</name>
</gene>
<name>PYDG_ACRSP</name>
<protein>
    <recommendedName>
        <fullName evidence="3">Alpha/beta hydrolase pydG</fullName>
        <ecNumber evidence="2">3.7.1.-</ecNumber>
    </recommendedName>
    <alternativeName>
        <fullName evidence="3">Pyrrocidines biosynthesis cluster protein G</fullName>
    </alternativeName>
</protein>